<sequence>MARLIFHFVFALILAAYLLSVTDAIPRGWQEPCFCPSKNPYCDCGDDLQVPTTSVISPKPIIEQCARCERNSQCNKVCPATCKYKVCIFNRTCEFSTCHCYRC</sequence>
<keyword id="KW-0929">Antimicrobial</keyword>
<keyword id="KW-1015">Disulfide bond</keyword>
<keyword id="KW-0295">Fungicide</keyword>
<keyword id="KW-0611">Plant defense</keyword>
<keyword id="KW-1185">Reference proteome</keyword>
<keyword id="KW-0964">Secreted</keyword>
<keyword id="KW-0732">Signal</keyword>
<name>DF268_ARATH</name>
<protein>
    <recommendedName>
        <fullName>Defensin-like protein 268</fullName>
    </recommendedName>
</protein>
<reference key="1">
    <citation type="journal article" date="2000" name="Nature">
        <title>Sequence and analysis of chromosome 1 of the plant Arabidopsis thaliana.</title>
        <authorList>
            <person name="Theologis A."/>
            <person name="Ecker J.R."/>
            <person name="Palm C.J."/>
            <person name="Federspiel N.A."/>
            <person name="Kaul S."/>
            <person name="White O."/>
            <person name="Alonso J."/>
            <person name="Altafi H."/>
            <person name="Araujo R."/>
            <person name="Bowman C.L."/>
            <person name="Brooks S.Y."/>
            <person name="Buehler E."/>
            <person name="Chan A."/>
            <person name="Chao Q."/>
            <person name="Chen H."/>
            <person name="Cheuk R.F."/>
            <person name="Chin C.W."/>
            <person name="Chung M.K."/>
            <person name="Conn L."/>
            <person name="Conway A.B."/>
            <person name="Conway A.R."/>
            <person name="Creasy T.H."/>
            <person name="Dewar K."/>
            <person name="Dunn P."/>
            <person name="Etgu P."/>
            <person name="Feldblyum T.V."/>
            <person name="Feng J.-D."/>
            <person name="Fong B."/>
            <person name="Fujii C.Y."/>
            <person name="Gill J.E."/>
            <person name="Goldsmith A.D."/>
            <person name="Haas B."/>
            <person name="Hansen N.F."/>
            <person name="Hughes B."/>
            <person name="Huizar L."/>
            <person name="Hunter J.L."/>
            <person name="Jenkins J."/>
            <person name="Johnson-Hopson C."/>
            <person name="Khan S."/>
            <person name="Khaykin E."/>
            <person name="Kim C.J."/>
            <person name="Koo H.L."/>
            <person name="Kremenetskaia I."/>
            <person name="Kurtz D.B."/>
            <person name="Kwan A."/>
            <person name="Lam B."/>
            <person name="Langin-Hooper S."/>
            <person name="Lee A."/>
            <person name="Lee J.M."/>
            <person name="Lenz C.A."/>
            <person name="Li J.H."/>
            <person name="Li Y.-P."/>
            <person name="Lin X."/>
            <person name="Liu S.X."/>
            <person name="Liu Z.A."/>
            <person name="Luros J.S."/>
            <person name="Maiti R."/>
            <person name="Marziali A."/>
            <person name="Militscher J."/>
            <person name="Miranda M."/>
            <person name="Nguyen M."/>
            <person name="Nierman W.C."/>
            <person name="Osborne B.I."/>
            <person name="Pai G."/>
            <person name="Peterson J."/>
            <person name="Pham P.K."/>
            <person name="Rizzo M."/>
            <person name="Rooney T."/>
            <person name="Rowley D."/>
            <person name="Sakano H."/>
            <person name="Salzberg S.L."/>
            <person name="Schwartz J.R."/>
            <person name="Shinn P."/>
            <person name="Southwick A.M."/>
            <person name="Sun H."/>
            <person name="Tallon L.J."/>
            <person name="Tambunga G."/>
            <person name="Toriumi M.J."/>
            <person name="Town C.D."/>
            <person name="Utterback T."/>
            <person name="Van Aken S."/>
            <person name="Vaysberg M."/>
            <person name="Vysotskaia V.S."/>
            <person name="Walker M."/>
            <person name="Wu D."/>
            <person name="Yu G."/>
            <person name="Fraser C.M."/>
            <person name="Venter J.C."/>
            <person name="Davis R.W."/>
        </authorList>
    </citation>
    <scope>NUCLEOTIDE SEQUENCE [LARGE SCALE GENOMIC DNA]</scope>
    <source>
        <strain>cv. Columbia</strain>
    </source>
</reference>
<reference key="2">
    <citation type="journal article" date="2017" name="Plant J.">
        <title>Araport11: a complete reannotation of the Arabidopsis thaliana reference genome.</title>
        <authorList>
            <person name="Cheng C.Y."/>
            <person name="Krishnakumar V."/>
            <person name="Chan A.P."/>
            <person name="Thibaud-Nissen F."/>
            <person name="Schobel S."/>
            <person name="Town C.D."/>
        </authorList>
    </citation>
    <scope>GENOME REANNOTATION</scope>
    <source>
        <strain>cv. Columbia</strain>
    </source>
</reference>
<reference key="3">
    <citation type="journal article" date="2006" name="Plant Biotechnol. J.">
        <title>Simultaneous high-throughput recombinational cloning of open reading frames in closed and open configurations.</title>
        <authorList>
            <person name="Underwood B.A."/>
            <person name="Vanderhaeghen R."/>
            <person name="Whitford R."/>
            <person name="Town C.D."/>
            <person name="Hilson P."/>
        </authorList>
    </citation>
    <scope>NUCLEOTIDE SEQUENCE [LARGE SCALE MRNA]</scope>
    <source>
        <strain>cv. Columbia</strain>
    </source>
</reference>
<reference key="4">
    <citation type="journal article" date="2007" name="Plant J.">
        <title>Small cysteine-rich peptides resembling antimicrobial peptides have been under-predicted in plants.</title>
        <authorList>
            <person name="Silverstein K.A.T."/>
            <person name="Moskal W.A. Jr."/>
            <person name="Wu H.C."/>
            <person name="Underwood B.A."/>
            <person name="Graham M.A."/>
            <person name="Town C.D."/>
            <person name="VandenBosch K.A."/>
        </authorList>
    </citation>
    <scope>NUCLEOTIDE SEQUENCE [LARGE SCALE MRNA]</scope>
    <source>
        <strain>cv. Columbia</strain>
    </source>
</reference>
<reference key="5">
    <citation type="journal article" date="2005" name="Plant Physiol.">
        <title>Genome organization of more than 300 defensin-like genes in Arabidopsis.</title>
        <authorList>
            <person name="Silverstein K.A.T."/>
            <person name="Graham M.A."/>
            <person name="Paape T.D."/>
            <person name="VandenBosch K.A."/>
        </authorList>
    </citation>
    <scope>GENE FAMILY</scope>
</reference>
<organism>
    <name type="scientific">Arabidopsis thaliana</name>
    <name type="common">Mouse-ear cress</name>
    <dbReference type="NCBI Taxonomy" id="3702"/>
    <lineage>
        <taxon>Eukaryota</taxon>
        <taxon>Viridiplantae</taxon>
        <taxon>Streptophyta</taxon>
        <taxon>Embryophyta</taxon>
        <taxon>Tracheophyta</taxon>
        <taxon>Spermatophyta</taxon>
        <taxon>Magnoliopsida</taxon>
        <taxon>eudicotyledons</taxon>
        <taxon>Gunneridae</taxon>
        <taxon>Pentapetalae</taxon>
        <taxon>rosids</taxon>
        <taxon>malvids</taxon>
        <taxon>Brassicales</taxon>
        <taxon>Brassicaceae</taxon>
        <taxon>Camelineae</taxon>
        <taxon>Arabidopsis</taxon>
    </lineage>
</organism>
<proteinExistence type="inferred from homology"/>
<feature type="signal peptide" evidence="2">
    <location>
        <begin position="1"/>
        <end position="24"/>
    </location>
</feature>
<feature type="chain" id="PRO_0000379730" description="Defensin-like protein 268">
    <location>
        <begin position="25"/>
        <end position="103"/>
    </location>
</feature>
<feature type="disulfide bond" evidence="1">
    <location>
        <begin position="44"/>
        <end position="103"/>
    </location>
</feature>
<feature type="disulfide bond" evidence="1">
    <location>
        <begin position="68"/>
        <end position="87"/>
    </location>
</feature>
<feature type="disulfide bond" evidence="1">
    <location>
        <begin position="74"/>
        <end position="98"/>
    </location>
</feature>
<feature type="disulfide bond" evidence="1">
    <location>
        <begin position="78"/>
        <end position="100"/>
    </location>
</feature>
<comment type="subcellular location">
    <subcellularLocation>
        <location evidence="1">Secreted</location>
    </subcellularLocation>
</comment>
<comment type="similarity">
    <text evidence="3">Belongs to the DEFL family.</text>
</comment>
<comment type="sequence caution" evidence="3">
    <conflict type="erroneous termination">
        <sequence resource="EMBL-CDS" id="ABK27948"/>
    </conflict>
    <text>Extended C-terminus.</text>
</comment>
<accession>Q2V4N6</accession>
<accession>A0MJU3</accession>
<evidence type="ECO:0000250" key="1"/>
<evidence type="ECO:0000255" key="2"/>
<evidence type="ECO:0000305" key="3"/>
<dbReference type="EMBL" id="AC027134">
    <property type="status" value="NOT_ANNOTATED_CDS"/>
    <property type="molecule type" value="Genomic_DNA"/>
</dbReference>
<dbReference type="EMBL" id="AC027656">
    <property type="status" value="NOT_ANNOTATED_CDS"/>
    <property type="molecule type" value="Genomic_DNA"/>
</dbReference>
<dbReference type="EMBL" id="CP002684">
    <property type="protein sequence ID" value="AEE29041.1"/>
    <property type="molecule type" value="Genomic_DNA"/>
</dbReference>
<dbReference type="EMBL" id="DQ912189">
    <property type="protein sequence ID" value="ABI34008.1"/>
    <property type="molecule type" value="mRNA"/>
</dbReference>
<dbReference type="EMBL" id="DQ912242">
    <property type="protein sequence ID" value="ABK27948.1"/>
    <property type="status" value="ALT_SEQ"/>
    <property type="molecule type" value="mRNA"/>
</dbReference>
<dbReference type="EMBL" id="EF182777">
    <property type="status" value="NOT_ANNOTATED_CDS"/>
    <property type="molecule type" value="mRNA"/>
</dbReference>
<dbReference type="RefSeq" id="NP_001031038.1">
    <property type="nucleotide sequence ID" value="NM_001035961.3"/>
</dbReference>
<dbReference type="STRING" id="3702.Q2V4N6"/>
<dbReference type="PaxDb" id="3702-AT1G13605.1"/>
<dbReference type="ProteomicsDB" id="224255"/>
<dbReference type="EnsemblPlants" id="AT1G13605.1">
    <property type="protein sequence ID" value="AT1G13605.1"/>
    <property type="gene ID" value="AT1G13605"/>
</dbReference>
<dbReference type="GeneID" id="3766718"/>
<dbReference type="Gramene" id="AT1G13605.1">
    <property type="protein sequence ID" value="AT1G13605.1"/>
    <property type="gene ID" value="AT1G13605"/>
</dbReference>
<dbReference type="KEGG" id="ath:AT1G13605"/>
<dbReference type="Araport" id="AT1G13605"/>
<dbReference type="TAIR" id="AT1G13605"/>
<dbReference type="HOGENOM" id="CLU_163606_0_0_1"/>
<dbReference type="InParanoid" id="Q2V4N6"/>
<dbReference type="OMA" id="TCKYKVC"/>
<dbReference type="OrthoDB" id="1020749at2759"/>
<dbReference type="PRO" id="PR:Q2V4N6"/>
<dbReference type="Proteomes" id="UP000006548">
    <property type="component" value="Chromosome 1"/>
</dbReference>
<dbReference type="ExpressionAtlas" id="Q2V4N6">
    <property type="expression patterns" value="baseline and differential"/>
</dbReference>
<dbReference type="GO" id="GO:0005576">
    <property type="term" value="C:extracellular region"/>
    <property type="evidence" value="ECO:0007669"/>
    <property type="project" value="UniProtKB-SubCell"/>
</dbReference>
<dbReference type="GO" id="GO:0050832">
    <property type="term" value="P:defense response to fungus"/>
    <property type="evidence" value="ECO:0007669"/>
    <property type="project" value="UniProtKB-KW"/>
</dbReference>
<dbReference type="GO" id="GO:0031640">
    <property type="term" value="P:killing of cells of another organism"/>
    <property type="evidence" value="ECO:0007669"/>
    <property type="project" value="UniProtKB-KW"/>
</dbReference>
<gene>
    <name type="ordered locus">At1g13605</name>
    <name type="ORF">F13B4</name>
    <name type="ORF">F21F23</name>
</gene>